<keyword id="KW-0479">Metal-binding</keyword>
<keyword id="KW-0597">Phosphoprotein</keyword>
<keyword id="KW-1185">Reference proteome</keyword>
<keyword id="KW-0862">Zinc</keyword>
<keyword id="KW-0863">Zinc-finger</keyword>
<gene>
    <name evidence="1" type="primary">Zcchc24</name>
</gene>
<sequence length="241" mass="26961">MSLLSAIDTSAASVYQPAQLLNWVYLSLQDTHQASAFDAFRPEPPAGAAPPELAFGKGRPEQLGSPLHSSYLNSVFQLQRGEALSSSVYRNASPYGSLNNIADGLSSLTEHFSDLTLTSEARKPSKRPPPNYLCHLCFNKGHYIKDCPQARPKGEGLTPYQGKKRCFGEYKCPKCKRKWMSGNSWANMGQECIKCHINVYPHKQRPLEKPDGLDVSDQSKEHPQHLCEKCKVLGYYCRRVQ</sequence>
<proteinExistence type="evidence at protein level"/>
<accession>B2RVL6</accession>
<evidence type="ECO:0000250" key="1">
    <source>
        <dbReference type="UniProtKB" id="Q8N2G6"/>
    </source>
</evidence>
<evidence type="ECO:0000255" key="2">
    <source>
        <dbReference type="PROSITE-ProRule" id="PRU00047"/>
    </source>
</evidence>
<evidence type="ECO:0000312" key="3">
    <source>
        <dbReference type="EMBL" id="AAI47264.1"/>
    </source>
</evidence>
<evidence type="ECO:0000312" key="4">
    <source>
        <dbReference type="EMBL" id="EDL01418.1"/>
    </source>
</evidence>
<organism>
    <name type="scientific">Mus musculus</name>
    <name type="common">Mouse</name>
    <dbReference type="NCBI Taxonomy" id="10090"/>
    <lineage>
        <taxon>Eukaryota</taxon>
        <taxon>Metazoa</taxon>
        <taxon>Chordata</taxon>
        <taxon>Craniata</taxon>
        <taxon>Vertebrata</taxon>
        <taxon>Euteleostomi</taxon>
        <taxon>Mammalia</taxon>
        <taxon>Eutheria</taxon>
        <taxon>Euarchontoglires</taxon>
        <taxon>Glires</taxon>
        <taxon>Rodentia</taxon>
        <taxon>Myomorpha</taxon>
        <taxon>Muroidea</taxon>
        <taxon>Muridae</taxon>
        <taxon>Murinae</taxon>
        <taxon>Mus</taxon>
        <taxon>Mus</taxon>
    </lineage>
</organism>
<reference evidence="4" key="1">
    <citation type="submission" date="2005-09" db="EMBL/GenBank/DDBJ databases">
        <authorList>
            <person name="Mural R.J."/>
            <person name="Adams M.D."/>
            <person name="Myers E.W."/>
            <person name="Smith H.O."/>
            <person name="Venter J.C."/>
        </authorList>
    </citation>
    <scope>NUCLEOTIDE SEQUENCE [LARGE SCALE GENOMIC DNA]</scope>
</reference>
<reference evidence="3" key="2">
    <citation type="journal article" date="2004" name="Genome Res.">
        <title>The status, quality, and expansion of the NIH full-length cDNA project: the Mammalian Gene Collection (MGC).</title>
        <authorList>
            <consortium name="The MGC Project Team"/>
        </authorList>
    </citation>
    <scope>NUCLEOTIDE SEQUENCE [LARGE SCALE MRNA]</scope>
    <source>
        <tissue evidence="3">Brain</tissue>
    </source>
</reference>
<reference key="3">
    <citation type="journal article" date="2009" name="Mol. Cell. Proteomics">
        <title>Large scale localization of protein phosphorylation by use of electron capture dissociation mass spectrometry.</title>
        <authorList>
            <person name="Sweet S.M."/>
            <person name="Bailey C.M."/>
            <person name="Cunningham D.L."/>
            <person name="Heath J.K."/>
            <person name="Cooper H.J."/>
        </authorList>
    </citation>
    <scope>IDENTIFICATION BY MASS SPECTROMETRY [LARGE SCALE ANALYSIS]</scope>
    <source>
        <tissue>Embryonic fibroblast</tissue>
    </source>
</reference>
<protein>
    <recommendedName>
        <fullName evidence="1">Zinc finger CCHC domain-containing protein 24</fullName>
    </recommendedName>
</protein>
<dbReference type="EMBL" id="CH466613">
    <property type="protein sequence ID" value="EDL01418.1"/>
    <property type="molecule type" value="Genomic_DNA"/>
</dbReference>
<dbReference type="EMBL" id="BC147263">
    <property type="protein sequence ID" value="AAI47264.1"/>
    <property type="molecule type" value="mRNA"/>
</dbReference>
<dbReference type="EMBL" id="BC147264">
    <property type="protein sequence ID" value="AAI47265.1"/>
    <property type="molecule type" value="mRNA"/>
</dbReference>
<dbReference type="CCDS" id="CCDS49419.1"/>
<dbReference type="RefSeq" id="NP_001094903.1">
    <property type="nucleotide sequence ID" value="NM_001101433.2"/>
</dbReference>
<dbReference type="FunCoup" id="B2RVL6">
    <property type="interactions" value="13"/>
</dbReference>
<dbReference type="STRING" id="10090.ENSMUSP00000068677"/>
<dbReference type="GlyGen" id="B2RVL6">
    <property type="glycosylation" value="1 site, 1 O-linked glycan (1 site)"/>
</dbReference>
<dbReference type="iPTMnet" id="B2RVL6"/>
<dbReference type="PhosphoSitePlus" id="B2RVL6"/>
<dbReference type="jPOST" id="B2RVL6"/>
<dbReference type="PaxDb" id="10090-ENSMUSP00000068677"/>
<dbReference type="PeptideAtlas" id="B2RVL6"/>
<dbReference type="ProteomicsDB" id="275132"/>
<dbReference type="Pumba" id="B2RVL6"/>
<dbReference type="Antibodypedia" id="29874">
    <property type="antibodies" value="119 antibodies from 18 providers"/>
</dbReference>
<dbReference type="Ensembl" id="ENSMUST00000069180.8">
    <property type="protein sequence ID" value="ENSMUSP00000068677.7"/>
    <property type="gene ID" value="ENSMUSG00000055538.8"/>
</dbReference>
<dbReference type="GeneID" id="71918"/>
<dbReference type="KEGG" id="mmu:71918"/>
<dbReference type="UCSC" id="uc011zho.1">
    <property type="organism name" value="mouse"/>
</dbReference>
<dbReference type="AGR" id="MGI:1919168"/>
<dbReference type="CTD" id="219654"/>
<dbReference type="MGI" id="MGI:1919168">
    <property type="gene designation" value="Zcchc24"/>
</dbReference>
<dbReference type="VEuPathDB" id="HostDB:ENSMUSG00000055538"/>
<dbReference type="eggNOG" id="ENOG502QRVW">
    <property type="taxonomic scope" value="Eukaryota"/>
</dbReference>
<dbReference type="GeneTree" id="ENSGT00390000008264"/>
<dbReference type="HOGENOM" id="CLU_081736_0_0_1"/>
<dbReference type="InParanoid" id="B2RVL6"/>
<dbReference type="OMA" id="CTEYSPG"/>
<dbReference type="OrthoDB" id="10038672at2759"/>
<dbReference type="PhylomeDB" id="B2RVL6"/>
<dbReference type="TreeFam" id="TF319664"/>
<dbReference type="BioGRID-ORCS" id="71918">
    <property type="hits" value="2 hits in 76 CRISPR screens"/>
</dbReference>
<dbReference type="ChiTaRS" id="Zcchc24">
    <property type="organism name" value="mouse"/>
</dbReference>
<dbReference type="PRO" id="PR:B2RVL6"/>
<dbReference type="Proteomes" id="UP000000589">
    <property type="component" value="Chromosome 14"/>
</dbReference>
<dbReference type="RNAct" id="B2RVL6">
    <property type="molecule type" value="protein"/>
</dbReference>
<dbReference type="Bgee" id="ENSMUSG00000055538">
    <property type="expression patterns" value="Expressed in cerebellar nuclear complex and 216 other cell types or tissues"/>
</dbReference>
<dbReference type="GO" id="GO:0003676">
    <property type="term" value="F:nucleic acid binding"/>
    <property type="evidence" value="ECO:0007669"/>
    <property type="project" value="InterPro"/>
</dbReference>
<dbReference type="GO" id="GO:0008270">
    <property type="term" value="F:zinc ion binding"/>
    <property type="evidence" value="ECO:0007669"/>
    <property type="project" value="UniProtKB-KW"/>
</dbReference>
<dbReference type="InterPro" id="IPR027377">
    <property type="entry name" value="ZAR1/RTP1-5-like_Znf-3CxxC"/>
</dbReference>
<dbReference type="InterPro" id="IPR033446">
    <property type="entry name" value="Zcchc24_Znf-3CxxC"/>
</dbReference>
<dbReference type="InterPro" id="IPR025829">
    <property type="entry name" value="Zn_knuckle_CX2CX3GHX4C"/>
</dbReference>
<dbReference type="InterPro" id="IPR001878">
    <property type="entry name" value="Znf_CCHC"/>
</dbReference>
<dbReference type="InterPro" id="IPR036875">
    <property type="entry name" value="Znf_CCHC_sf"/>
</dbReference>
<dbReference type="Pfam" id="PF23490">
    <property type="entry name" value="ZCCHC24_C"/>
    <property type="match status" value="1"/>
</dbReference>
<dbReference type="Pfam" id="PF13696">
    <property type="entry name" value="zf-CCHC_2"/>
    <property type="match status" value="1"/>
</dbReference>
<dbReference type="Pfam" id="PF17180">
    <property type="entry name" value="Zn_ribbon_3CxxC_2"/>
    <property type="match status" value="1"/>
</dbReference>
<dbReference type="SMART" id="SM01328">
    <property type="entry name" value="zf-3CxxC"/>
    <property type="match status" value="1"/>
</dbReference>
<dbReference type="SUPFAM" id="SSF57756">
    <property type="entry name" value="Retrovirus zinc finger-like domains"/>
    <property type="match status" value="1"/>
</dbReference>
<dbReference type="PROSITE" id="PS50158">
    <property type="entry name" value="ZF_CCHC"/>
    <property type="match status" value="1"/>
</dbReference>
<feature type="chain" id="PRO_0000351149" description="Zinc finger CCHC domain-containing protein 24">
    <location>
        <begin position="1"/>
        <end position="241"/>
    </location>
</feature>
<feature type="zinc finger region" description="CCHC-type" evidence="2">
    <location>
        <begin position="132"/>
        <end position="149"/>
    </location>
</feature>
<feature type="modified residue" description="Phosphoserine" evidence="1">
    <location>
        <position position="65"/>
    </location>
</feature>
<feature type="modified residue" description="Phosphoserine" evidence="1">
    <location>
        <position position="93"/>
    </location>
</feature>
<name>ZCH24_MOUSE</name>